<comment type="function">
    <text evidence="2">Acts as a negative regulator of transcription.</text>
</comment>
<comment type="subcellular location">
    <subcellularLocation>
        <location evidence="3">Nucleus</location>
    </subcellularLocation>
</comment>
<comment type="tissue specificity">
    <text evidence="2">Expressed predominantly in CNS.</text>
</comment>
<dbReference type="EMBL" id="AB026623">
    <property type="protein sequence ID" value="BAA77266.1"/>
    <property type="molecule type" value="Genomic_DNA"/>
</dbReference>
<dbReference type="RefSeq" id="NP_001383603.1">
    <property type="nucleotide sequence ID" value="NM_001396674.1"/>
</dbReference>
<dbReference type="RefSeq" id="XP_015130211.1">
    <property type="nucleotide sequence ID" value="XM_015274725.1"/>
</dbReference>
<dbReference type="SMR" id="Q9W7R5"/>
<dbReference type="STRING" id="9031.ENSGALP00000049013"/>
<dbReference type="Ensembl" id="ENSGALT00000137299">
    <property type="protein sequence ID" value="ENSGALP00000081388"/>
    <property type="gene ID" value="ENSGALG00000062154"/>
</dbReference>
<dbReference type="Ensembl" id="ENSGALT00010014526.1">
    <property type="protein sequence ID" value="ENSGALP00010008543.1"/>
    <property type="gene ID" value="ENSGALG00010006075.1"/>
</dbReference>
<dbReference type="GeneID" id="107051027"/>
<dbReference type="KEGG" id="gga:107051027"/>
<dbReference type="VEuPathDB" id="HostDB:geneid_107051027"/>
<dbReference type="GeneTree" id="ENSGT00940000162795"/>
<dbReference type="InParanoid" id="Q9W7R5"/>
<dbReference type="OMA" id="LHGHEAF"/>
<dbReference type="OrthoDB" id="6247875at2759"/>
<dbReference type="PhylomeDB" id="Q9W7R5"/>
<dbReference type="Reactome" id="R-GGA-3769402">
    <property type="pathway name" value="Deactivation of the beta-catenin transactivating complex"/>
</dbReference>
<dbReference type="PRO" id="PR:Q9W7R5"/>
<dbReference type="Proteomes" id="UP000000539">
    <property type="component" value="Chromosome 1"/>
</dbReference>
<dbReference type="Bgee" id="ENSGALG00000035157">
    <property type="expression patterns" value="Expressed in brain and 6 other cell types or tissues"/>
</dbReference>
<dbReference type="GO" id="GO:0005634">
    <property type="term" value="C:nucleus"/>
    <property type="evidence" value="ECO:0000318"/>
    <property type="project" value="GO_Central"/>
</dbReference>
<dbReference type="GO" id="GO:0001228">
    <property type="term" value="F:DNA-binding transcription activator activity, RNA polymerase II-specific"/>
    <property type="evidence" value="ECO:0000318"/>
    <property type="project" value="GO_Central"/>
</dbReference>
<dbReference type="GO" id="GO:0000978">
    <property type="term" value="F:RNA polymerase II cis-regulatory region sequence-specific DNA binding"/>
    <property type="evidence" value="ECO:0000318"/>
    <property type="project" value="GO_Central"/>
</dbReference>
<dbReference type="GO" id="GO:0043565">
    <property type="term" value="F:sequence-specific DNA binding"/>
    <property type="evidence" value="ECO:0000314"/>
    <property type="project" value="UniProtKB"/>
</dbReference>
<dbReference type="GO" id="GO:0007420">
    <property type="term" value="P:brain development"/>
    <property type="evidence" value="ECO:0000318"/>
    <property type="project" value="GO_Central"/>
</dbReference>
<dbReference type="GO" id="GO:0048839">
    <property type="term" value="P:inner ear development"/>
    <property type="evidence" value="ECO:0000315"/>
    <property type="project" value="CACAO"/>
</dbReference>
<dbReference type="GO" id="GO:0042472">
    <property type="term" value="P:inner ear morphogenesis"/>
    <property type="evidence" value="ECO:0000315"/>
    <property type="project" value="AgBase"/>
</dbReference>
<dbReference type="GO" id="GO:0045892">
    <property type="term" value="P:negative regulation of DNA-templated transcription"/>
    <property type="evidence" value="ECO:0000314"/>
    <property type="project" value="UniProtKB"/>
</dbReference>
<dbReference type="GO" id="GO:0000122">
    <property type="term" value="P:negative regulation of transcription by RNA polymerase II"/>
    <property type="evidence" value="ECO:0000314"/>
    <property type="project" value="UniProtKB"/>
</dbReference>
<dbReference type="GO" id="GO:0030182">
    <property type="term" value="P:neuron differentiation"/>
    <property type="evidence" value="ECO:0000318"/>
    <property type="project" value="GO_Central"/>
</dbReference>
<dbReference type="GO" id="GO:0045944">
    <property type="term" value="P:positive regulation of transcription by RNA polymerase II"/>
    <property type="evidence" value="ECO:0000318"/>
    <property type="project" value="GO_Central"/>
</dbReference>
<dbReference type="GO" id="GO:0045595">
    <property type="term" value="P:regulation of cell differentiation"/>
    <property type="evidence" value="ECO:0000315"/>
    <property type="project" value="AgBase"/>
</dbReference>
<dbReference type="GO" id="GO:0043588">
    <property type="term" value="P:skin development"/>
    <property type="evidence" value="ECO:0007669"/>
    <property type="project" value="Ensembl"/>
</dbReference>
<dbReference type="GO" id="GO:0048863">
    <property type="term" value="P:stem cell differentiation"/>
    <property type="evidence" value="ECO:0007669"/>
    <property type="project" value="Ensembl"/>
</dbReference>
<dbReference type="CDD" id="cd01388">
    <property type="entry name" value="HMG-box_SoxB"/>
    <property type="match status" value="1"/>
</dbReference>
<dbReference type="FunFam" id="1.10.30.10:FF:000002">
    <property type="entry name" value="transcription factor Sox-2"/>
    <property type="match status" value="1"/>
</dbReference>
<dbReference type="Gene3D" id="1.10.30.10">
    <property type="entry name" value="High mobility group box domain"/>
    <property type="match status" value="1"/>
</dbReference>
<dbReference type="InterPro" id="IPR009071">
    <property type="entry name" value="HMG_box_dom"/>
</dbReference>
<dbReference type="InterPro" id="IPR036910">
    <property type="entry name" value="HMG_box_dom_sf"/>
</dbReference>
<dbReference type="InterPro" id="IPR022097">
    <property type="entry name" value="SOX_fam"/>
</dbReference>
<dbReference type="InterPro" id="IPR050140">
    <property type="entry name" value="SRY-related_HMG-box_TF-like"/>
</dbReference>
<dbReference type="PANTHER" id="PTHR10270">
    <property type="entry name" value="SOX TRANSCRIPTION FACTOR"/>
    <property type="match status" value="1"/>
</dbReference>
<dbReference type="PANTHER" id="PTHR10270:SF313">
    <property type="entry name" value="TRANSCRIPTION FACTOR SOX-21"/>
    <property type="match status" value="1"/>
</dbReference>
<dbReference type="Pfam" id="PF00505">
    <property type="entry name" value="HMG_box"/>
    <property type="match status" value="1"/>
</dbReference>
<dbReference type="Pfam" id="PF12336">
    <property type="entry name" value="SOXp"/>
    <property type="match status" value="1"/>
</dbReference>
<dbReference type="SMART" id="SM00398">
    <property type="entry name" value="HMG"/>
    <property type="match status" value="1"/>
</dbReference>
<dbReference type="SUPFAM" id="SSF47095">
    <property type="entry name" value="HMG-box"/>
    <property type="match status" value="1"/>
</dbReference>
<dbReference type="PROSITE" id="PS50118">
    <property type="entry name" value="HMG_BOX_2"/>
    <property type="match status" value="1"/>
</dbReference>
<protein>
    <recommendedName>
        <fullName>Transcription factor SOX-21</fullName>
    </recommendedName>
</protein>
<organism>
    <name type="scientific">Gallus gallus</name>
    <name type="common">Chicken</name>
    <dbReference type="NCBI Taxonomy" id="9031"/>
    <lineage>
        <taxon>Eukaryota</taxon>
        <taxon>Metazoa</taxon>
        <taxon>Chordata</taxon>
        <taxon>Craniata</taxon>
        <taxon>Vertebrata</taxon>
        <taxon>Euteleostomi</taxon>
        <taxon>Archelosauria</taxon>
        <taxon>Archosauria</taxon>
        <taxon>Dinosauria</taxon>
        <taxon>Saurischia</taxon>
        <taxon>Theropoda</taxon>
        <taxon>Coelurosauria</taxon>
        <taxon>Aves</taxon>
        <taxon>Neognathae</taxon>
        <taxon>Galloanserae</taxon>
        <taxon>Galliformes</taxon>
        <taxon>Phasianidae</taxon>
        <taxon>Phasianinae</taxon>
        <taxon>Gallus</taxon>
    </lineage>
</organism>
<gene>
    <name type="primary">SOX21</name>
</gene>
<proteinExistence type="evidence at transcript level"/>
<sequence>MSKPVDHVKRPMNAFMVWSRAQRRKMAQENPKMHNSEISKRLGAEWKLLSEAEKRPFIDEAKRLRAMHMKEHPDYKYRPRRKPKTLLKKDKFAFPVPYGLGAVAEHEPPHGLKAAALHGGAAGGLGPDSLLGNPEKAAAAAAAAAARVFFPQSAAAAAAAAAAAAAGGPYSLLDLGSKMAEISSSSSAGSALPYASSLGYPGAGGAGAFHGAAAAAAAAAAAAGGHTHSHPSPGNPGYMIPCNCSAWPGPGLQPPLAYILLPGMGKPQLDPYPAAYAAAL</sequence>
<accession>Q9W7R5</accession>
<feature type="chain" id="PRO_0000048772" description="Transcription factor SOX-21">
    <location>
        <begin position="1"/>
        <end position="280"/>
    </location>
</feature>
<feature type="DNA-binding region" description="HMG box" evidence="1">
    <location>
        <begin position="8"/>
        <end position="76"/>
    </location>
</feature>
<name>SOX21_CHICK</name>
<keyword id="KW-0238">DNA-binding</keyword>
<keyword id="KW-0539">Nucleus</keyword>
<keyword id="KW-1185">Reference proteome</keyword>
<keyword id="KW-0678">Repressor</keyword>
<keyword id="KW-0804">Transcription</keyword>
<keyword id="KW-0805">Transcription regulation</keyword>
<evidence type="ECO:0000255" key="1">
    <source>
        <dbReference type="PROSITE-ProRule" id="PRU00267"/>
    </source>
</evidence>
<evidence type="ECO:0000269" key="2">
    <source>
    </source>
</evidence>
<evidence type="ECO:0000305" key="3"/>
<reference evidence="3" key="1">
    <citation type="journal article" date="1999" name="Mech. Dev.">
        <title>Two distinct subgroups of Group B Sox genes for transcriptional activators and repressors: their expression during embryonic organogenesis of the chicken.</title>
        <authorList>
            <person name="Uchikawa M."/>
            <person name="Kamachi Y."/>
            <person name="Kondoh H."/>
        </authorList>
    </citation>
    <scope>NUCLEOTIDE SEQUENCE [GENOMIC DNA]</scope>
    <scope>FUNCTION</scope>
    <scope>TISSUE SPECIFICITY</scope>
    <source>
        <tissue>Liver</tissue>
    </source>
</reference>